<gene>
    <name type="primary">DBP5</name>
    <name type="ORF">FGRRES_10087</name>
    <name type="ORF">FGSG_10087</name>
</gene>
<dbReference type="EC" id="3.6.4.13"/>
<dbReference type="EMBL" id="DS231669">
    <property type="protein sequence ID" value="ESU16758.1"/>
    <property type="molecule type" value="Genomic_DNA"/>
</dbReference>
<dbReference type="EMBL" id="HG970332">
    <property type="protein sequence ID" value="CEF75429.1"/>
    <property type="molecule type" value="Genomic_DNA"/>
</dbReference>
<dbReference type="RefSeq" id="XP_011319020.1">
    <property type="nucleotide sequence ID" value="XM_011320718.1"/>
</dbReference>
<dbReference type="SMR" id="Q4HY71"/>
<dbReference type="FunCoup" id="Q4HY71">
    <property type="interactions" value="783"/>
</dbReference>
<dbReference type="STRING" id="229533.Q4HY71"/>
<dbReference type="GeneID" id="23557008"/>
<dbReference type="KEGG" id="fgr:FGSG_10087"/>
<dbReference type="VEuPathDB" id="FungiDB:FGRAMPH1_01G07249"/>
<dbReference type="eggNOG" id="KOG0332">
    <property type="taxonomic scope" value="Eukaryota"/>
</dbReference>
<dbReference type="HOGENOM" id="CLU_003041_1_0_1"/>
<dbReference type="InParanoid" id="Q4HY71"/>
<dbReference type="OrthoDB" id="72063at110618"/>
<dbReference type="Proteomes" id="UP000070720">
    <property type="component" value="Chromosome 1"/>
</dbReference>
<dbReference type="GO" id="GO:0005737">
    <property type="term" value="C:cytoplasm"/>
    <property type="evidence" value="ECO:0007669"/>
    <property type="project" value="UniProtKB-SubCell"/>
</dbReference>
<dbReference type="GO" id="GO:0031965">
    <property type="term" value="C:nuclear membrane"/>
    <property type="evidence" value="ECO:0007669"/>
    <property type="project" value="UniProtKB-SubCell"/>
</dbReference>
<dbReference type="GO" id="GO:0005643">
    <property type="term" value="C:nuclear pore"/>
    <property type="evidence" value="ECO:0007669"/>
    <property type="project" value="UniProtKB-SubCell"/>
</dbReference>
<dbReference type="GO" id="GO:0005524">
    <property type="term" value="F:ATP binding"/>
    <property type="evidence" value="ECO:0007669"/>
    <property type="project" value="UniProtKB-KW"/>
</dbReference>
<dbReference type="GO" id="GO:0016887">
    <property type="term" value="F:ATP hydrolysis activity"/>
    <property type="evidence" value="ECO:0007669"/>
    <property type="project" value="RHEA"/>
</dbReference>
<dbReference type="GO" id="GO:0003723">
    <property type="term" value="F:RNA binding"/>
    <property type="evidence" value="ECO:0007669"/>
    <property type="project" value="UniProtKB-KW"/>
</dbReference>
<dbReference type="GO" id="GO:0003724">
    <property type="term" value="F:RNA helicase activity"/>
    <property type="evidence" value="ECO:0007669"/>
    <property type="project" value="UniProtKB-EC"/>
</dbReference>
<dbReference type="GO" id="GO:0051028">
    <property type="term" value="P:mRNA transport"/>
    <property type="evidence" value="ECO:0007669"/>
    <property type="project" value="UniProtKB-KW"/>
</dbReference>
<dbReference type="GO" id="GO:0015031">
    <property type="term" value="P:protein transport"/>
    <property type="evidence" value="ECO:0007669"/>
    <property type="project" value="UniProtKB-KW"/>
</dbReference>
<dbReference type="CDD" id="cd17963">
    <property type="entry name" value="DEADc_DDX19_DDX25"/>
    <property type="match status" value="1"/>
</dbReference>
<dbReference type="CDD" id="cd18787">
    <property type="entry name" value="SF2_C_DEAD"/>
    <property type="match status" value="1"/>
</dbReference>
<dbReference type="Gene3D" id="3.40.50.300">
    <property type="entry name" value="P-loop containing nucleotide triphosphate hydrolases"/>
    <property type="match status" value="2"/>
</dbReference>
<dbReference type="InterPro" id="IPR011545">
    <property type="entry name" value="DEAD/DEAH_box_helicase_dom"/>
</dbReference>
<dbReference type="InterPro" id="IPR014001">
    <property type="entry name" value="Helicase_ATP-bd"/>
</dbReference>
<dbReference type="InterPro" id="IPR001650">
    <property type="entry name" value="Helicase_C-like"/>
</dbReference>
<dbReference type="InterPro" id="IPR027417">
    <property type="entry name" value="P-loop_NTPase"/>
</dbReference>
<dbReference type="InterPro" id="IPR000629">
    <property type="entry name" value="RNA-helicase_DEAD-box_CS"/>
</dbReference>
<dbReference type="InterPro" id="IPR014014">
    <property type="entry name" value="RNA_helicase_DEAD_Q_motif"/>
</dbReference>
<dbReference type="PANTHER" id="PTHR47958">
    <property type="entry name" value="ATP-DEPENDENT RNA HELICASE DBP3"/>
    <property type="match status" value="1"/>
</dbReference>
<dbReference type="Pfam" id="PF00270">
    <property type="entry name" value="DEAD"/>
    <property type="match status" value="1"/>
</dbReference>
<dbReference type="Pfam" id="PF00271">
    <property type="entry name" value="Helicase_C"/>
    <property type="match status" value="1"/>
</dbReference>
<dbReference type="SMART" id="SM00487">
    <property type="entry name" value="DEXDc"/>
    <property type="match status" value="1"/>
</dbReference>
<dbReference type="SMART" id="SM00490">
    <property type="entry name" value="HELICc"/>
    <property type="match status" value="1"/>
</dbReference>
<dbReference type="SUPFAM" id="SSF52540">
    <property type="entry name" value="P-loop containing nucleoside triphosphate hydrolases"/>
    <property type="match status" value="1"/>
</dbReference>
<dbReference type="PROSITE" id="PS00039">
    <property type="entry name" value="DEAD_ATP_HELICASE"/>
    <property type="match status" value="1"/>
</dbReference>
<dbReference type="PROSITE" id="PS51192">
    <property type="entry name" value="HELICASE_ATP_BIND_1"/>
    <property type="match status" value="1"/>
</dbReference>
<dbReference type="PROSITE" id="PS51194">
    <property type="entry name" value="HELICASE_CTER"/>
    <property type="match status" value="1"/>
</dbReference>
<dbReference type="PROSITE" id="PS51195">
    <property type="entry name" value="Q_MOTIF"/>
    <property type="match status" value="1"/>
</dbReference>
<protein>
    <recommendedName>
        <fullName>ATP-dependent RNA helicase DBP5</fullName>
        <ecNumber>3.6.4.13</ecNumber>
    </recommendedName>
</protein>
<evidence type="ECO:0000250" key="1"/>
<evidence type="ECO:0000255" key="2">
    <source>
        <dbReference type="PROSITE-ProRule" id="PRU00541"/>
    </source>
</evidence>
<evidence type="ECO:0000255" key="3">
    <source>
        <dbReference type="PROSITE-ProRule" id="PRU00542"/>
    </source>
</evidence>
<evidence type="ECO:0000256" key="4">
    <source>
        <dbReference type="SAM" id="MobiDB-lite"/>
    </source>
</evidence>
<evidence type="ECO:0000305" key="5"/>
<proteinExistence type="inferred from homology"/>
<comment type="function">
    <text evidence="1">ATP-dependent RNA helicase associated with the nuclear pore complex and essential for mRNA export from the nucleus. May participate in a terminal step of mRNA export through the removal of proteins that accompany mRNA through the nucleopore complex. May also be involved in early transcription (By similarity).</text>
</comment>
<comment type="catalytic activity">
    <reaction>
        <text>ATP + H2O = ADP + phosphate + H(+)</text>
        <dbReference type="Rhea" id="RHEA:13065"/>
        <dbReference type="ChEBI" id="CHEBI:15377"/>
        <dbReference type="ChEBI" id="CHEBI:15378"/>
        <dbReference type="ChEBI" id="CHEBI:30616"/>
        <dbReference type="ChEBI" id="CHEBI:43474"/>
        <dbReference type="ChEBI" id="CHEBI:456216"/>
        <dbReference type="EC" id="3.6.4.13"/>
    </reaction>
</comment>
<comment type="subunit">
    <text evidence="1">Associates with the nuclear pore complex.</text>
</comment>
<comment type="subcellular location">
    <subcellularLocation>
        <location evidence="1">Cytoplasm</location>
    </subcellularLocation>
    <subcellularLocation>
        <location>Nucleus</location>
        <location>Nuclear pore complex</location>
    </subcellularLocation>
    <subcellularLocation>
        <location evidence="1">Nucleus membrane</location>
        <topology evidence="1">Peripheral membrane protein</topology>
        <orientation evidence="1">Cytoplasmic side</orientation>
    </subcellularLocation>
    <text evidence="1">Nuclear pore complex cytoplasmic fibrils.</text>
</comment>
<comment type="domain">
    <text>The Q motif is unique to and characteristic of the DEAD box family of RNA helicases and controls ATP binding and hydrolysis.</text>
</comment>
<comment type="similarity">
    <text evidence="5">Belongs to the DEAD box helicase family. DDX19/DBP5 subfamily.</text>
</comment>
<sequence length="488" mass="53168">MADLASRITKPDEVAAETPAETPAETAPAASGELGQADGNIEDLGGSGLQEPEWDVEVSLSELQNNEATPFHSATTWQDLGLREDLLKGLLSLNFLKPSKVQGKSLPLMLSDPPRNMLAQSQSGTGKTAAFVTAILSRVDFSKPDQPQALALAPSRELARQIEGVINAIGRFVENKKVAAAIPGVLPRGEPVRASVIVGTPGTVMDIIRRRQLDISQLRVLVLDEADNMLDQQGLGDQCLKVKNMLPKEIQVLLFSATFPENVMKYAGKFAPNAHSLKLQRSELTVKGISQMFIDCPDDNMKYDILCKLYGLMTIGQSVIFVKTRDSASEIERRMVADGHKVSALHAAFDGAERDNLLTKFRQGENKVLITTNVLARGIDVSSVSMVINYDIPMKGRGDTEPDAETYLHRIGRTGRFGRVGVSISFVYDKKSFDALSKIAEMYGIDLVKLDTEDWDEAEERVKEVIKKNRAQASYAPSATEPKAAAGA</sequence>
<name>DBP5_GIBZE</name>
<reference key="1">
    <citation type="journal article" date="2007" name="Science">
        <title>The Fusarium graminearum genome reveals a link between localized polymorphism and pathogen specialization.</title>
        <authorList>
            <person name="Cuomo C.A."/>
            <person name="Gueldener U."/>
            <person name="Xu J.-R."/>
            <person name="Trail F."/>
            <person name="Turgeon B.G."/>
            <person name="Di Pietro A."/>
            <person name="Walton J.D."/>
            <person name="Ma L.-J."/>
            <person name="Baker S.E."/>
            <person name="Rep M."/>
            <person name="Adam G."/>
            <person name="Antoniw J."/>
            <person name="Baldwin T."/>
            <person name="Calvo S.E."/>
            <person name="Chang Y.-L."/>
            <person name="DeCaprio D."/>
            <person name="Gale L.R."/>
            <person name="Gnerre S."/>
            <person name="Goswami R.S."/>
            <person name="Hammond-Kosack K."/>
            <person name="Harris L.J."/>
            <person name="Hilburn K."/>
            <person name="Kennell J.C."/>
            <person name="Kroken S."/>
            <person name="Magnuson J.K."/>
            <person name="Mannhaupt G."/>
            <person name="Mauceli E.W."/>
            <person name="Mewes H.-W."/>
            <person name="Mitterbauer R."/>
            <person name="Muehlbauer G."/>
            <person name="Muensterkoetter M."/>
            <person name="Nelson D."/>
            <person name="O'Donnell K."/>
            <person name="Ouellet T."/>
            <person name="Qi W."/>
            <person name="Quesneville H."/>
            <person name="Roncero M.I.G."/>
            <person name="Seong K.-Y."/>
            <person name="Tetko I.V."/>
            <person name="Urban M."/>
            <person name="Waalwijk C."/>
            <person name="Ward T.J."/>
            <person name="Yao J."/>
            <person name="Birren B.W."/>
            <person name="Kistler H.C."/>
        </authorList>
    </citation>
    <scope>NUCLEOTIDE SEQUENCE [LARGE SCALE GENOMIC DNA]</scope>
    <source>
        <strain>ATCC MYA-4620 / CBS 123657 / FGSC 9075 / NRRL 31084 / PH-1</strain>
    </source>
</reference>
<reference key="2">
    <citation type="journal article" date="2010" name="Nature">
        <title>Comparative genomics reveals mobile pathogenicity chromosomes in Fusarium.</title>
        <authorList>
            <person name="Ma L.-J."/>
            <person name="van der Does H.C."/>
            <person name="Borkovich K.A."/>
            <person name="Coleman J.J."/>
            <person name="Daboussi M.-J."/>
            <person name="Di Pietro A."/>
            <person name="Dufresne M."/>
            <person name="Freitag M."/>
            <person name="Grabherr M."/>
            <person name="Henrissat B."/>
            <person name="Houterman P.M."/>
            <person name="Kang S."/>
            <person name="Shim W.-B."/>
            <person name="Woloshuk C."/>
            <person name="Xie X."/>
            <person name="Xu J.-R."/>
            <person name="Antoniw J."/>
            <person name="Baker S.E."/>
            <person name="Bluhm B.H."/>
            <person name="Breakspear A."/>
            <person name="Brown D.W."/>
            <person name="Butchko R.A.E."/>
            <person name="Chapman S."/>
            <person name="Coulson R."/>
            <person name="Coutinho P.M."/>
            <person name="Danchin E.G.J."/>
            <person name="Diener A."/>
            <person name="Gale L.R."/>
            <person name="Gardiner D.M."/>
            <person name="Goff S."/>
            <person name="Hammond-Kosack K.E."/>
            <person name="Hilburn K."/>
            <person name="Hua-Van A."/>
            <person name="Jonkers W."/>
            <person name="Kazan K."/>
            <person name="Kodira C.D."/>
            <person name="Koehrsen M."/>
            <person name="Kumar L."/>
            <person name="Lee Y.-H."/>
            <person name="Li L."/>
            <person name="Manners J.M."/>
            <person name="Miranda-Saavedra D."/>
            <person name="Mukherjee M."/>
            <person name="Park G."/>
            <person name="Park J."/>
            <person name="Park S.-Y."/>
            <person name="Proctor R.H."/>
            <person name="Regev A."/>
            <person name="Ruiz-Roldan M.C."/>
            <person name="Sain D."/>
            <person name="Sakthikumar S."/>
            <person name="Sykes S."/>
            <person name="Schwartz D.C."/>
            <person name="Turgeon B.G."/>
            <person name="Wapinski I."/>
            <person name="Yoder O."/>
            <person name="Young S."/>
            <person name="Zeng Q."/>
            <person name="Zhou S."/>
            <person name="Galagan J."/>
            <person name="Cuomo C.A."/>
            <person name="Kistler H.C."/>
            <person name="Rep M."/>
        </authorList>
    </citation>
    <scope>GENOME REANNOTATION</scope>
    <source>
        <strain>ATCC MYA-4620 / CBS 123657 / FGSC 9075 / NRRL 31084 / PH-1</strain>
    </source>
</reference>
<reference key="3">
    <citation type="journal article" date="2015" name="BMC Genomics">
        <title>The completed genome sequence of the pathogenic ascomycete fungus Fusarium graminearum.</title>
        <authorList>
            <person name="King R."/>
            <person name="Urban M."/>
            <person name="Hammond-Kosack M.C.U."/>
            <person name="Hassani-Pak K."/>
            <person name="Hammond-Kosack K.E."/>
        </authorList>
    </citation>
    <scope>NUCLEOTIDE SEQUENCE [LARGE SCALE GENOMIC DNA]</scope>
    <source>
        <strain>ATCC MYA-4620 / CBS 123657 / FGSC 9075 / NRRL 31084 / PH-1</strain>
    </source>
</reference>
<accession>Q4HY71</accession>
<accession>A0A0E0RW04</accession>
<accession>V6RQB4</accession>
<organism>
    <name type="scientific">Gibberella zeae (strain ATCC MYA-4620 / CBS 123657 / FGSC 9075 / NRRL 31084 / PH-1)</name>
    <name type="common">Wheat head blight fungus</name>
    <name type="synonym">Fusarium graminearum</name>
    <dbReference type="NCBI Taxonomy" id="229533"/>
    <lineage>
        <taxon>Eukaryota</taxon>
        <taxon>Fungi</taxon>
        <taxon>Dikarya</taxon>
        <taxon>Ascomycota</taxon>
        <taxon>Pezizomycotina</taxon>
        <taxon>Sordariomycetes</taxon>
        <taxon>Hypocreomycetidae</taxon>
        <taxon>Hypocreales</taxon>
        <taxon>Nectriaceae</taxon>
        <taxon>Fusarium</taxon>
    </lineage>
</organism>
<feature type="chain" id="PRO_0000232224" description="ATP-dependent RNA helicase DBP5">
    <location>
        <begin position="1"/>
        <end position="488"/>
    </location>
</feature>
<feature type="domain" description="Helicase ATP-binding" evidence="2">
    <location>
        <begin position="108"/>
        <end position="277"/>
    </location>
</feature>
<feature type="domain" description="Helicase C-terminal" evidence="3">
    <location>
        <begin position="305"/>
        <end position="466"/>
    </location>
</feature>
<feature type="region of interest" description="Disordered" evidence="4">
    <location>
        <begin position="1"/>
        <end position="49"/>
    </location>
</feature>
<feature type="short sequence motif" description="Q motif">
    <location>
        <begin position="75"/>
        <end position="103"/>
    </location>
</feature>
<feature type="short sequence motif" description="DEAD box">
    <location>
        <begin position="224"/>
        <end position="227"/>
    </location>
</feature>
<feature type="compositionally biased region" description="Low complexity" evidence="4">
    <location>
        <begin position="16"/>
        <end position="30"/>
    </location>
</feature>
<feature type="binding site" evidence="2">
    <location>
        <begin position="121"/>
        <end position="128"/>
    </location>
    <ligand>
        <name>ATP</name>
        <dbReference type="ChEBI" id="CHEBI:30616"/>
    </ligand>
</feature>
<keyword id="KW-0067">ATP-binding</keyword>
<keyword id="KW-0963">Cytoplasm</keyword>
<keyword id="KW-0347">Helicase</keyword>
<keyword id="KW-0378">Hydrolase</keyword>
<keyword id="KW-0472">Membrane</keyword>
<keyword id="KW-0509">mRNA transport</keyword>
<keyword id="KW-0906">Nuclear pore complex</keyword>
<keyword id="KW-0547">Nucleotide-binding</keyword>
<keyword id="KW-0539">Nucleus</keyword>
<keyword id="KW-0653">Protein transport</keyword>
<keyword id="KW-1185">Reference proteome</keyword>
<keyword id="KW-0694">RNA-binding</keyword>
<keyword id="KW-0811">Translocation</keyword>
<keyword id="KW-0813">Transport</keyword>